<dbReference type="EC" id="3.4.19.13" evidence="2"/>
<dbReference type="EC" id="2.3.2.2" evidence="2"/>
<dbReference type="EMBL" id="AC095632">
    <property type="status" value="NOT_ANNOTATED_CDS"/>
    <property type="molecule type" value="Genomic_DNA"/>
</dbReference>
<dbReference type="EMBL" id="BN000385">
    <property type="protein sequence ID" value="CAE51911.1"/>
    <property type="molecule type" value="mRNA"/>
</dbReference>
<dbReference type="RefSeq" id="NP_001002820.1">
    <property type="nucleotide sequence ID" value="NM_001002820.2"/>
</dbReference>
<dbReference type="SMR" id="Q6IE08"/>
<dbReference type="FunCoup" id="Q6IE08">
    <property type="interactions" value="125"/>
</dbReference>
<dbReference type="STRING" id="10116.ENSRNOP00000039691"/>
<dbReference type="MEROPS" id="T03.022"/>
<dbReference type="GlyCosmos" id="Q6IE08">
    <property type="glycosylation" value="3 sites, No reported glycans"/>
</dbReference>
<dbReference type="GlyGen" id="Q6IE08">
    <property type="glycosylation" value="3 sites"/>
</dbReference>
<dbReference type="PhosphoSitePlus" id="Q6IE08"/>
<dbReference type="PaxDb" id="10116-ENSRNOP00000039691"/>
<dbReference type="Ensembl" id="ENSRNOT00000113777.1">
    <property type="protein sequence ID" value="ENSRNOP00000080315.1"/>
    <property type="gene ID" value="ENSRNOG00000015210.7"/>
</dbReference>
<dbReference type="GeneID" id="408206"/>
<dbReference type="KEGG" id="rno:408206"/>
<dbReference type="AGR" id="RGD:1303335"/>
<dbReference type="CTD" id="124975"/>
<dbReference type="RGD" id="1303335">
    <property type="gene designation" value="Ggt6"/>
</dbReference>
<dbReference type="eggNOG" id="KOG2410">
    <property type="taxonomic scope" value="Eukaryota"/>
</dbReference>
<dbReference type="GeneTree" id="ENSGT00940000161883"/>
<dbReference type="HOGENOM" id="CLU_049993_0_0_1"/>
<dbReference type="InParanoid" id="Q6IE08"/>
<dbReference type="OMA" id="CLVVVHP"/>
<dbReference type="OrthoDB" id="91466at9989"/>
<dbReference type="PhylomeDB" id="Q6IE08"/>
<dbReference type="TreeFam" id="TF338758"/>
<dbReference type="Reactome" id="R-RNO-174403">
    <property type="pathway name" value="Glutathione synthesis and recycling"/>
</dbReference>
<dbReference type="Reactome" id="R-RNO-5423646">
    <property type="pathway name" value="Aflatoxin activation and detoxification"/>
</dbReference>
<dbReference type="Reactome" id="R-RNO-9753281">
    <property type="pathway name" value="Paracetamol ADME"/>
</dbReference>
<dbReference type="UniPathway" id="UPA00204"/>
<dbReference type="PRO" id="PR:Q6IE08"/>
<dbReference type="Proteomes" id="UP000002494">
    <property type="component" value="Chromosome 10"/>
</dbReference>
<dbReference type="Bgee" id="ENSRNOG00000015210">
    <property type="expression patterns" value="Expressed in esophagus and 11 other cell types or tissues"/>
</dbReference>
<dbReference type="GO" id="GO:0016020">
    <property type="term" value="C:membrane"/>
    <property type="evidence" value="ECO:0007669"/>
    <property type="project" value="UniProtKB-SubCell"/>
</dbReference>
<dbReference type="GO" id="GO:0036374">
    <property type="term" value="F:glutathione hydrolase activity"/>
    <property type="evidence" value="ECO:0007669"/>
    <property type="project" value="UniProtKB-EC"/>
</dbReference>
<dbReference type="GO" id="GO:0103068">
    <property type="term" value="F:leukotriene C4 gamma-glutamyl transferase activity"/>
    <property type="evidence" value="ECO:0007669"/>
    <property type="project" value="UniProtKB-EC"/>
</dbReference>
<dbReference type="GO" id="GO:0006750">
    <property type="term" value="P:glutathione biosynthetic process"/>
    <property type="evidence" value="ECO:0007669"/>
    <property type="project" value="UniProtKB-KW"/>
</dbReference>
<dbReference type="Gene3D" id="3.60.20.40">
    <property type="match status" value="1"/>
</dbReference>
<dbReference type="InterPro" id="IPR052688">
    <property type="entry name" value="Gamma-glutamyltransfase"/>
</dbReference>
<dbReference type="InterPro" id="IPR043137">
    <property type="entry name" value="GGT_ssub"/>
</dbReference>
<dbReference type="InterPro" id="IPR029055">
    <property type="entry name" value="Ntn_hydrolases_N"/>
</dbReference>
<dbReference type="PANTHER" id="PTHR47278">
    <property type="entry name" value="GLUTATHIONE HYDROLASE 6"/>
    <property type="match status" value="1"/>
</dbReference>
<dbReference type="PANTHER" id="PTHR47278:SF1">
    <property type="entry name" value="GLUTATHIONE HYDROLASE 6"/>
    <property type="match status" value="1"/>
</dbReference>
<dbReference type="Pfam" id="PF01019">
    <property type="entry name" value="G_glu_transpept"/>
    <property type="match status" value="3"/>
</dbReference>
<dbReference type="PRINTS" id="PR01210">
    <property type="entry name" value="GGTRANSPTASE"/>
</dbReference>
<dbReference type="SUPFAM" id="SSF56235">
    <property type="entry name" value="N-terminal nucleophile aminohydrolases (Ntn hydrolases)"/>
    <property type="match status" value="1"/>
</dbReference>
<reference key="1">
    <citation type="journal article" date="2004" name="Nature">
        <title>Genome sequence of the Brown Norway rat yields insights into mammalian evolution.</title>
        <authorList>
            <person name="Gibbs R.A."/>
            <person name="Weinstock G.M."/>
            <person name="Metzker M.L."/>
            <person name="Muzny D.M."/>
            <person name="Sodergren E.J."/>
            <person name="Scherer S."/>
            <person name="Scott G."/>
            <person name="Steffen D."/>
            <person name="Worley K.C."/>
            <person name="Burch P.E."/>
            <person name="Okwuonu G."/>
            <person name="Hines S."/>
            <person name="Lewis L."/>
            <person name="Deramo C."/>
            <person name="Delgado O."/>
            <person name="Dugan-Rocha S."/>
            <person name="Miner G."/>
            <person name="Morgan M."/>
            <person name="Hawes A."/>
            <person name="Gill R."/>
            <person name="Holt R.A."/>
            <person name="Adams M.D."/>
            <person name="Amanatides P.G."/>
            <person name="Baden-Tillson H."/>
            <person name="Barnstead M."/>
            <person name="Chin S."/>
            <person name="Evans C.A."/>
            <person name="Ferriera S."/>
            <person name="Fosler C."/>
            <person name="Glodek A."/>
            <person name="Gu Z."/>
            <person name="Jennings D."/>
            <person name="Kraft C.L."/>
            <person name="Nguyen T."/>
            <person name="Pfannkoch C.M."/>
            <person name="Sitter C."/>
            <person name="Sutton G.G."/>
            <person name="Venter J.C."/>
            <person name="Woodage T."/>
            <person name="Smith D."/>
            <person name="Lee H.-M."/>
            <person name="Gustafson E."/>
            <person name="Cahill P."/>
            <person name="Kana A."/>
            <person name="Doucette-Stamm L."/>
            <person name="Weinstock K."/>
            <person name="Fechtel K."/>
            <person name="Weiss R.B."/>
            <person name="Dunn D.M."/>
            <person name="Green E.D."/>
            <person name="Blakesley R.W."/>
            <person name="Bouffard G.G."/>
            <person name="De Jong P.J."/>
            <person name="Osoegawa K."/>
            <person name="Zhu B."/>
            <person name="Marra M."/>
            <person name="Schein J."/>
            <person name="Bosdet I."/>
            <person name="Fjell C."/>
            <person name="Jones S."/>
            <person name="Krzywinski M."/>
            <person name="Mathewson C."/>
            <person name="Siddiqui A."/>
            <person name="Wye N."/>
            <person name="McPherson J."/>
            <person name="Zhao S."/>
            <person name="Fraser C.M."/>
            <person name="Shetty J."/>
            <person name="Shatsman S."/>
            <person name="Geer K."/>
            <person name="Chen Y."/>
            <person name="Abramzon S."/>
            <person name="Nierman W.C."/>
            <person name="Havlak P.H."/>
            <person name="Chen R."/>
            <person name="Durbin K.J."/>
            <person name="Egan A."/>
            <person name="Ren Y."/>
            <person name="Song X.-Z."/>
            <person name="Li B."/>
            <person name="Liu Y."/>
            <person name="Qin X."/>
            <person name="Cawley S."/>
            <person name="Cooney A.J."/>
            <person name="D'Souza L.M."/>
            <person name="Martin K."/>
            <person name="Wu J.Q."/>
            <person name="Gonzalez-Garay M.L."/>
            <person name="Jackson A.R."/>
            <person name="Kalafus K.J."/>
            <person name="McLeod M.P."/>
            <person name="Milosavljevic A."/>
            <person name="Virk D."/>
            <person name="Volkov A."/>
            <person name="Wheeler D.A."/>
            <person name="Zhang Z."/>
            <person name="Bailey J.A."/>
            <person name="Eichler E.E."/>
            <person name="Tuzun E."/>
            <person name="Birney E."/>
            <person name="Mongin E."/>
            <person name="Ureta-Vidal A."/>
            <person name="Woodwark C."/>
            <person name="Zdobnov E."/>
            <person name="Bork P."/>
            <person name="Suyama M."/>
            <person name="Torrents D."/>
            <person name="Alexandersson M."/>
            <person name="Trask B.J."/>
            <person name="Young J.M."/>
            <person name="Huang H."/>
            <person name="Wang H."/>
            <person name="Xing H."/>
            <person name="Daniels S."/>
            <person name="Gietzen D."/>
            <person name="Schmidt J."/>
            <person name="Stevens K."/>
            <person name="Vitt U."/>
            <person name="Wingrove J."/>
            <person name="Camara F."/>
            <person name="Mar Alba M."/>
            <person name="Abril J.F."/>
            <person name="Guigo R."/>
            <person name="Smit A."/>
            <person name="Dubchak I."/>
            <person name="Rubin E.M."/>
            <person name="Couronne O."/>
            <person name="Poliakov A."/>
            <person name="Huebner N."/>
            <person name="Ganten D."/>
            <person name="Goesele C."/>
            <person name="Hummel O."/>
            <person name="Kreitler T."/>
            <person name="Lee Y.-A."/>
            <person name="Monti J."/>
            <person name="Schulz H."/>
            <person name="Zimdahl H."/>
            <person name="Himmelbauer H."/>
            <person name="Lehrach H."/>
            <person name="Jacob H.J."/>
            <person name="Bromberg S."/>
            <person name="Gullings-Handley J."/>
            <person name="Jensen-Seaman M.I."/>
            <person name="Kwitek A.E."/>
            <person name="Lazar J."/>
            <person name="Pasko D."/>
            <person name="Tonellato P.J."/>
            <person name="Twigger S."/>
            <person name="Ponting C.P."/>
            <person name="Duarte J.M."/>
            <person name="Rice S."/>
            <person name="Goodstadt L."/>
            <person name="Beatson S.A."/>
            <person name="Emes R.D."/>
            <person name="Winter E.E."/>
            <person name="Webber C."/>
            <person name="Brandt P."/>
            <person name="Nyakatura G."/>
            <person name="Adetobi M."/>
            <person name="Chiaromonte F."/>
            <person name="Elnitski L."/>
            <person name="Eswara P."/>
            <person name="Hardison R.C."/>
            <person name="Hou M."/>
            <person name="Kolbe D."/>
            <person name="Makova K."/>
            <person name="Miller W."/>
            <person name="Nekrutenko A."/>
            <person name="Riemer C."/>
            <person name="Schwartz S."/>
            <person name="Taylor J."/>
            <person name="Yang S."/>
            <person name="Zhang Y."/>
            <person name="Lindpaintner K."/>
            <person name="Andrews T.D."/>
            <person name="Caccamo M."/>
            <person name="Clamp M."/>
            <person name="Clarke L."/>
            <person name="Curwen V."/>
            <person name="Durbin R.M."/>
            <person name="Eyras E."/>
            <person name="Searle S.M."/>
            <person name="Cooper G.M."/>
            <person name="Batzoglou S."/>
            <person name="Brudno M."/>
            <person name="Sidow A."/>
            <person name="Stone E.A."/>
            <person name="Payseur B.A."/>
            <person name="Bourque G."/>
            <person name="Lopez-Otin C."/>
            <person name="Puente X.S."/>
            <person name="Chakrabarti K."/>
            <person name="Chatterji S."/>
            <person name="Dewey C."/>
            <person name="Pachter L."/>
            <person name="Bray N."/>
            <person name="Yap V.B."/>
            <person name="Caspi A."/>
            <person name="Tesler G."/>
            <person name="Pevzner P.A."/>
            <person name="Haussler D."/>
            <person name="Roskin K.M."/>
            <person name="Baertsch R."/>
            <person name="Clawson H."/>
            <person name="Furey T.S."/>
            <person name="Hinrichs A.S."/>
            <person name="Karolchik D."/>
            <person name="Kent W.J."/>
            <person name="Rosenbloom K.R."/>
            <person name="Trumbower H."/>
            <person name="Weirauch M."/>
            <person name="Cooper D.N."/>
            <person name="Stenson P.D."/>
            <person name="Ma B."/>
            <person name="Brent M."/>
            <person name="Arumugam M."/>
            <person name="Shteynberg D."/>
            <person name="Copley R.R."/>
            <person name="Taylor M.S."/>
            <person name="Riethman H."/>
            <person name="Mudunuri U."/>
            <person name="Peterson J."/>
            <person name="Guyer M."/>
            <person name="Felsenfeld A."/>
            <person name="Old S."/>
            <person name="Mockrin S."/>
            <person name="Collins F.S."/>
        </authorList>
    </citation>
    <scope>NUCLEOTIDE SEQUENCE [LARGE SCALE GENOMIC DNA]</scope>
    <source>
        <strain>Brown Norway</strain>
    </source>
</reference>
<reference key="2">
    <citation type="journal article" date="2004" name="Genome Res.">
        <title>A genomic analysis of rat proteases and protease inhibitors.</title>
        <authorList>
            <person name="Puente X.S."/>
            <person name="Lopez-Otin C."/>
        </authorList>
    </citation>
    <scope>IDENTIFICATION</scope>
    <source>
        <strain>Sprague-Dawley</strain>
    </source>
</reference>
<comment type="function">
    <text evidence="2">Hydrolyzes and transfers gamma-glutamyl moieties from glutathione and other gamma-glutamyl compounds to acceptors.</text>
</comment>
<comment type="catalytic activity">
    <reaction evidence="2">
        <text>an N-terminal (5-L-glutamyl)-[peptide] + an alpha-amino acid = 5-L-glutamyl amino acid + an N-terminal L-alpha-aminoacyl-[peptide]</text>
        <dbReference type="Rhea" id="RHEA:23904"/>
        <dbReference type="Rhea" id="RHEA-COMP:9780"/>
        <dbReference type="Rhea" id="RHEA-COMP:9795"/>
        <dbReference type="ChEBI" id="CHEBI:77644"/>
        <dbReference type="ChEBI" id="CHEBI:78597"/>
        <dbReference type="ChEBI" id="CHEBI:78599"/>
        <dbReference type="ChEBI" id="CHEBI:78608"/>
        <dbReference type="EC" id="2.3.2.2"/>
    </reaction>
    <physiologicalReaction direction="left-to-right" evidence="2">
        <dbReference type="Rhea" id="RHEA:23905"/>
    </physiologicalReaction>
</comment>
<comment type="catalytic activity">
    <reaction evidence="2">
        <text>glutathione + H2O = L-cysteinylglycine + L-glutamate</text>
        <dbReference type="Rhea" id="RHEA:28807"/>
        <dbReference type="ChEBI" id="CHEBI:15377"/>
        <dbReference type="ChEBI" id="CHEBI:29985"/>
        <dbReference type="ChEBI" id="CHEBI:57925"/>
        <dbReference type="ChEBI" id="CHEBI:61694"/>
        <dbReference type="EC" id="3.4.19.13"/>
    </reaction>
    <physiologicalReaction direction="left-to-right" evidence="2">
        <dbReference type="Rhea" id="RHEA:28808"/>
    </physiologicalReaction>
</comment>
<comment type="catalytic activity">
    <reaction evidence="2">
        <text>an S-substituted glutathione + H2O = an S-substituted L-cysteinylglycine + L-glutamate</text>
        <dbReference type="Rhea" id="RHEA:59468"/>
        <dbReference type="ChEBI" id="CHEBI:15377"/>
        <dbReference type="ChEBI" id="CHEBI:29985"/>
        <dbReference type="ChEBI" id="CHEBI:90779"/>
        <dbReference type="ChEBI" id="CHEBI:143103"/>
        <dbReference type="EC" id="3.4.19.13"/>
    </reaction>
    <physiologicalReaction direction="left-to-right" evidence="2">
        <dbReference type="Rhea" id="RHEA:59469"/>
    </physiologicalReaction>
</comment>
<comment type="pathway">
    <text evidence="2">Sulfur metabolism; glutathione metabolism.</text>
</comment>
<comment type="subunit">
    <text evidence="2">Heterodimer composed of the light and heavy chains. The active site is located in the light chain.</text>
</comment>
<comment type="subcellular location">
    <subcellularLocation>
        <location evidence="2">Membrane</location>
        <topology evidence="1">Single-pass type II membrane protein</topology>
    </subcellularLocation>
</comment>
<comment type="PTM">
    <text evidence="2">Cleaved by autocatalysis into a large and a small subunit and the autocatalytic cleavage is essential to the functional activation of the enzyme.</text>
</comment>
<comment type="similarity">
    <text evidence="4">Belongs to the gamma-glutamyltransferase family.</text>
</comment>
<protein>
    <recommendedName>
        <fullName evidence="4">Glutathione hydrolase 6</fullName>
        <ecNumber evidence="2">3.4.19.13</ecNumber>
    </recommendedName>
    <alternativeName>
        <fullName>Gamma-glutamyltransferase 6</fullName>
        <shortName>GGT 6</shortName>
        <ecNumber evidence="2">2.3.2.2</ecNumber>
    </alternativeName>
    <alternativeName>
        <fullName>Gamma-glutamyltranspeptidase 6</fullName>
    </alternativeName>
    <component>
        <recommendedName>
            <fullName>Glutathione hydrolase 6 heavy chain</fullName>
        </recommendedName>
    </component>
    <component>
        <recommendedName>
            <fullName>Glutathione hydrolase 6 light chain</fullName>
        </recommendedName>
    </component>
</protein>
<sequence length="498" mass="51559">MDATTGAVLYQKLQLWEPGMESEEEEEEEEIAEPLVLSLRRLQNTPGNKVGGLPGAWTRLLAGLLLLAVSSSLALRQLQGRNSPKGNLGPVDLPASRHSHHPGVYHHSAVISPAATCSRLGQELLVAGGNVVDAGVGAALCLAVVHPHATGLGATFWGLFYNSSSGNSTALTAGPAQILAPGLGLPTALPALHLLHTHFGRLPWSHLLAKPAMLAQKGFEVDAPLASALAAQGTEGLCPLFCHTNGTPLGLGAQVTNPNLAAVLLREALASSPDLVGNALLNLLVRDLGLELPSVQPKPSLEPALQLLLPQGVLFTTPGPSAGPELMGLLESTLHSKTPSPASCSSLLQTAETPVSSALATVDSHGSMLLLTSSLNSSFGSGHLSPSTGVLLSNLEASSVPSTWACPLILRGNLDDTEDDMLGLVASGIPRGAKAMACTLFNHLTTPQTQQQVQHQAQQRPTESPGICGKEALLQVVVHAEHAQVSSIPSGCCPFQGY</sequence>
<evidence type="ECO:0000250" key="1">
    <source>
        <dbReference type="UniProtKB" id="P07314"/>
    </source>
</evidence>
<evidence type="ECO:0000250" key="2">
    <source>
        <dbReference type="UniProtKB" id="P19440"/>
    </source>
</evidence>
<evidence type="ECO:0000255" key="3"/>
<evidence type="ECO:0000305" key="4"/>
<evidence type="ECO:0000312" key="5">
    <source>
        <dbReference type="RGD" id="1303335"/>
    </source>
</evidence>
<feature type="chain" id="PRO_0000314958" description="Glutathione hydrolase 6 heavy chain">
    <location>
        <begin position="1"/>
        <end status="unknown"/>
    </location>
</feature>
<feature type="chain" id="PRO_0000314959" description="Glutathione hydrolase 6 light chain">
    <location>
        <begin status="unknown"/>
        <end position="498"/>
    </location>
</feature>
<feature type="topological domain" description="Cytoplasmic" evidence="1">
    <location>
        <begin position="1"/>
        <end position="49"/>
    </location>
</feature>
<feature type="transmembrane region" description="Helical; Signal-anchor for type II membrane protein" evidence="3">
    <location>
        <begin position="50"/>
        <end position="70"/>
    </location>
</feature>
<feature type="topological domain" description="Extracellular" evidence="1">
    <location>
        <begin position="71"/>
        <end position="498"/>
    </location>
</feature>
<feature type="glycosylation site" description="N-linked (GlcNAc...) asparagine" evidence="3">
    <location>
        <position position="162"/>
    </location>
</feature>
<feature type="glycosylation site" description="N-linked (GlcNAc...) asparagine" evidence="3">
    <location>
        <position position="167"/>
    </location>
</feature>
<feature type="glycosylation site" description="N-linked (GlcNAc...) asparagine" evidence="3">
    <location>
        <position position="376"/>
    </location>
</feature>
<keyword id="KW-0012">Acyltransferase</keyword>
<keyword id="KW-0317">Glutathione biosynthesis</keyword>
<keyword id="KW-0325">Glycoprotein</keyword>
<keyword id="KW-0378">Hydrolase</keyword>
<keyword id="KW-0472">Membrane</keyword>
<keyword id="KW-1185">Reference proteome</keyword>
<keyword id="KW-0735">Signal-anchor</keyword>
<keyword id="KW-0808">Transferase</keyword>
<keyword id="KW-0812">Transmembrane</keyword>
<keyword id="KW-1133">Transmembrane helix</keyword>
<keyword id="KW-0865">Zymogen</keyword>
<name>GGT6_RAT</name>
<proteinExistence type="evidence at transcript level"/>
<organism>
    <name type="scientific">Rattus norvegicus</name>
    <name type="common">Rat</name>
    <dbReference type="NCBI Taxonomy" id="10116"/>
    <lineage>
        <taxon>Eukaryota</taxon>
        <taxon>Metazoa</taxon>
        <taxon>Chordata</taxon>
        <taxon>Craniata</taxon>
        <taxon>Vertebrata</taxon>
        <taxon>Euteleostomi</taxon>
        <taxon>Mammalia</taxon>
        <taxon>Eutheria</taxon>
        <taxon>Euarchontoglires</taxon>
        <taxon>Glires</taxon>
        <taxon>Rodentia</taxon>
        <taxon>Myomorpha</taxon>
        <taxon>Muroidea</taxon>
        <taxon>Muridae</taxon>
        <taxon>Murinae</taxon>
        <taxon>Rattus</taxon>
    </lineage>
</organism>
<accession>Q6IE08</accession>
<gene>
    <name evidence="5" type="primary">Ggt6</name>
</gene>